<protein>
    <recommendedName>
        <fullName>Effector protein hopAE1</fullName>
    </recommendedName>
    <alternativeName>
        <fullName>Type III effector holPsyAE</fullName>
    </alternativeName>
</protein>
<organism>
    <name type="scientific">Pseudomonas savastanoi pv. phaseolicola (strain 1448A / Race 6)</name>
    <name type="common">Pseudomonas syringae pv. phaseolicola (strain 1448A / Race 6)</name>
    <dbReference type="NCBI Taxonomy" id="264730"/>
    <lineage>
        <taxon>Bacteria</taxon>
        <taxon>Pseudomonadati</taxon>
        <taxon>Pseudomonadota</taxon>
        <taxon>Gammaproteobacteria</taxon>
        <taxon>Pseudomonadales</taxon>
        <taxon>Pseudomonadaceae</taxon>
        <taxon>Pseudomonas</taxon>
    </lineage>
</organism>
<gene>
    <name type="primary">hopAE1</name>
    <name type="synonym">holPsyAE</name>
    <name type="ordered locus">PSPPH_4326</name>
</gene>
<sequence length="912" mass="97695">MMPSQITRSSHSSLPEVAPASGDATGVSEQTPQQARTVAFFSSGELAVAFGRTSAAPEQDSVRLLSALQRELDKQHPSWHTVAQLCQSLAEVGTTEQGWHQLASEDQLPALRELLDRCTHRLADMPAAHASHDSLSQACEGLRTARLHQSVARLTARPSSLARAMADLLTLTHLDPETLGAEPPVISSYTLFSHFVRTAKQRTADLNDSLQRQPDAVVSLLRSHADTLNDLEMLPGALQALTENCQDAPARNELRELAEVAGALLQLLLEHDLLPRLEEISIEPGEAPAPGHEPAEPRLTTRQALLKVGGNLVRKFDAYGALAPMDDKALLALMRTPAPHLSPDQMHAFLNKHVLHLTQEQRDIVSNTPLPFAPEEDIEARYGMGFDEKLRLALANGSLVLSEEQLARLGDLPSAATTTSDVVQTLLEKPSSALSEAERDMLGAIVQANAQGQLDAWRAHNEQLPAVLSRSGLPSDVKDELLSLNKSMNAELGTLKNGASLKSRVLASPAMLLALAPLPLAVAFVSKDNSYSSSLVAHFTKNAVFMAGLMMNELTNARTNVDHGLNRYFVTVLANAIVAQPTFARNEHLLEQVGFGIATAVASGAATLGVFNRESIVAAFKLAKSKLSRQDTGNARIPQEDHLAVVKHFDVSEHFAQQMKVATELYKQDKSITDIMNSSLTYLGTKSSEFQARFEVADALRAGLQLAEGERKADPDFYTKLGLVALTASIGAALVMLMKSMVGKADYAADGVWCVSEMLKLAMNPEVDMQKAVQVFKEIVGLNLVMTGFLGVNKVWNFLDKGIKGYASGAAVLTAANLTLPGMVGEVAGAAAGKGLSYLTDKGKAAHQAGRAAASWAGDYVSTSRLGSAVGTLQTAIPGRIAGGQVVAGLYDRFRYLTWSHPAPAPQAAGEP</sequence>
<dbReference type="EMBL" id="CP000058">
    <property type="protein sequence ID" value="AAZ36433.1"/>
    <property type="molecule type" value="Genomic_DNA"/>
</dbReference>
<dbReference type="RefSeq" id="WP_011169512.1">
    <property type="nucleotide sequence ID" value="NC_005773.3"/>
</dbReference>
<dbReference type="SMR" id="Q48DU8"/>
<dbReference type="KEGG" id="psp:PSPPH_4326"/>
<dbReference type="eggNOG" id="ENOG50338PH">
    <property type="taxonomic scope" value="Bacteria"/>
</dbReference>
<dbReference type="HOGENOM" id="CLU_318813_0_0_6"/>
<dbReference type="Proteomes" id="UP000000551">
    <property type="component" value="Chromosome"/>
</dbReference>
<dbReference type="GO" id="GO:0005576">
    <property type="term" value="C:extracellular region"/>
    <property type="evidence" value="ECO:0007669"/>
    <property type="project" value="UniProtKB-SubCell"/>
</dbReference>
<dbReference type="InterPro" id="IPR029378">
    <property type="entry name" value="T3SS_HopW1-1/HolPsyAE"/>
</dbReference>
<dbReference type="Pfam" id="PF15457">
    <property type="entry name" value="HopW1-1"/>
    <property type="match status" value="1"/>
</dbReference>
<name>HOAE1_PSE14</name>
<evidence type="ECO:0000256" key="1">
    <source>
        <dbReference type="SAM" id="MobiDB-lite"/>
    </source>
</evidence>
<evidence type="ECO:0000305" key="2"/>
<accession>Q48DU8</accession>
<feature type="chain" id="PRO_0000245647" description="Effector protein hopAE1">
    <location>
        <begin position="1"/>
        <end position="912"/>
    </location>
</feature>
<feature type="region of interest" description="Disordered" evidence="1">
    <location>
        <begin position="1"/>
        <end position="32"/>
    </location>
</feature>
<feature type="compositionally biased region" description="Polar residues" evidence="1">
    <location>
        <begin position="1"/>
        <end position="13"/>
    </location>
</feature>
<keyword id="KW-0964">Secreted</keyword>
<proteinExistence type="inferred from homology"/>
<reference key="1">
    <citation type="journal article" date="2005" name="J. Bacteriol.">
        <title>Whole-genome sequence analysis of Pseudomonas syringae pv. phaseolicola 1448A reveals divergence among pathovars in genes involved in virulence and transposition.</title>
        <authorList>
            <person name="Joardar V."/>
            <person name="Lindeberg M."/>
            <person name="Jackson R.W."/>
            <person name="Selengut J."/>
            <person name="Dodson R."/>
            <person name="Brinkac L.M."/>
            <person name="Daugherty S.C."/>
            <person name="DeBoy R.T."/>
            <person name="Durkin A.S."/>
            <person name="Gwinn Giglio M."/>
            <person name="Madupu R."/>
            <person name="Nelson W.C."/>
            <person name="Rosovitz M.J."/>
            <person name="Sullivan S.A."/>
            <person name="Crabtree J."/>
            <person name="Creasy T."/>
            <person name="Davidsen T.M."/>
            <person name="Haft D.H."/>
            <person name="Zafar N."/>
            <person name="Zhou L."/>
            <person name="Halpin R."/>
            <person name="Holley T."/>
            <person name="Khouri H.M."/>
            <person name="Feldblyum T.V."/>
            <person name="White O."/>
            <person name="Fraser C.M."/>
            <person name="Chatterjee A.K."/>
            <person name="Cartinhour S."/>
            <person name="Schneider D."/>
            <person name="Mansfield J.W."/>
            <person name="Collmer A."/>
            <person name="Buell R."/>
        </authorList>
    </citation>
    <scope>NUCLEOTIDE SEQUENCE [LARGE SCALE GENOMIC DNA]</scope>
    <source>
        <strain>1448A / Race 6</strain>
    </source>
</reference>
<comment type="subcellular location">
    <subcellularLocation>
        <location>Secreted</location>
    </subcellularLocation>
    <text evidence="2">Secreted via type III secretion system (T3SS).</text>
</comment>
<comment type="similarity">
    <text evidence="2">Belongs to the HopW family.</text>
</comment>